<keyword id="KW-1003">Cell membrane</keyword>
<keyword id="KW-0350">Heme biosynthesis</keyword>
<keyword id="KW-0472">Membrane</keyword>
<keyword id="KW-0808">Transferase</keyword>
<keyword id="KW-0812">Transmembrane</keyword>
<keyword id="KW-1133">Transmembrane helix</keyword>
<reference key="1">
    <citation type="submission" date="2007-02" db="EMBL/GenBank/DDBJ databases">
        <title>Complete sequence of Mycobacterium sp. JLS.</title>
        <authorList>
            <consortium name="US DOE Joint Genome Institute"/>
            <person name="Copeland A."/>
            <person name="Lucas S."/>
            <person name="Lapidus A."/>
            <person name="Barry K."/>
            <person name="Detter J.C."/>
            <person name="Glavina del Rio T."/>
            <person name="Hammon N."/>
            <person name="Israni S."/>
            <person name="Dalin E."/>
            <person name="Tice H."/>
            <person name="Pitluck S."/>
            <person name="Chain P."/>
            <person name="Malfatti S."/>
            <person name="Shin M."/>
            <person name="Vergez L."/>
            <person name="Schmutz J."/>
            <person name="Larimer F."/>
            <person name="Land M."/>
            <person name="Hauser L."/>
            <person name="Kyrpides N."/>
            <person name="Mikhailova N."/>
            <person name="Miller C.D."/>
            <person name="Anderson A.J."/>
            <person name="Sims R.C."/>
            <person name="Richardson P."/>
        </authorList>
    </citation>
    <scope>NUCLEOTIDE SEQUENCE [LARGE SCALE GENOMIC DNA]</scope>
    <source>
        <strain>JLS</strain>
    </source>
</reference>
<organism>
    <name type="scientific">Mycobacterium sp. (strain JLS)</name>
    <dbReference type="NCBI Taxonomy" id="164757"/>
    <lineage>
        <taxon>Bacteria</taxon>
        <taxon>Bacillati</taxon>
        <taxon>Actinomycetota</taxon>
        <taxon>Actinomycetes</taxon>
        <taxon>Mycobacteriales</taxon>
        <taxon>Mycobacteriaceae</taxon>
        <taxon>Mycobacterium</taxon>
    </lineage>
</organism>
<gene>
    <name evidence="1" type="primary">ctaB</name>
    <name type="ordered locus">Mjls_2455</name>
</gene>
<comment type="function">
    <text evidence="1">Converts heme B (protoheme IX) to heme O by substitution of the vinyl group on carbon 2 of heme B porphyrin ring with a hydroxyethyl farnesyl side group.</text>
</comment>
<comment type="catalytic activity">
    <reaction evidence="1">
        <text>heme b + (2E,6E)-farnesyl diphosphate + H2O = Fe(II)-heme o + diphosphate</text>
        <dbReference type="Rhea" id="RHEA:28070"/>
        <dbReference type="ChEBI" id="CHEBI:15377"/>
        <dbReference type="ChEBI" id="CHEBI:33019"/>
        <dbReference type="ChEBI" id="CHEBI:60344"/>
        <dbReference type="ChEBI" id="CHEBI:60530"/>
        <dbReference type="ChEBI" id="CHEBI:175763"/>
        <dbReference type="EC" id="2.5.1.141"/>
    </reaction>
</comment>
<comment type="pathway">
    <text evidence="1">Porphyrin-containing compound metabolism; heme O biosynthesis; heme O from protoheme: step 1/1.</text>
</comment>
<comment type="subcellular location">
    <subcellularLocation>
        <location evidence="1">Cell membrane</location>
        <topology evidence="1">Multi-pass membrane protein</topology>
    </subcellularLocation>
</comment>
<comment type="miscellaneous">
    <text evidence="1">Carbon 2 of the heme B porphyrin ring is defined according to the Fischer nomenclature.</text>
</comment>
<comment type="similarity">
    <text evidence="1">Belongs to the UbiA prenyltransferase family. Protoheme IX farnesyltransferase subfamily.</text>
</comment>
<proteinExistence type="inferred from homology"/>
<dbReference type="EC" id="2.5.1.141" evidence="1"/>
<dbReference type="EMBL" id="CP000580">
    <property type="protein sequence ID" value="ABN98239.1"/>
    <property type="molecule type" value="Genomic_DNA"/>
</dbReference>
<dbReference type="SMR" id="A3PZB2"/>
<dbReference type="KEGG" id="mjl:Mjls_2455"/>
<dbReference type="HOGENOM" id="CLU_029631_0_1_11"/>
<dbReference type="BioCyc" id="MSP164757:G1G8C-2474-MONOMER"/>
<dbReference type="UniPathway" id="UPA00834">
    <property type="reaction ID" value="UER00712"/>
</dbReference>
<dbReference type="GO" id="GO:0005886">
    <property type="term" value="C:plasma membrane"/>
    <property type="evidence" value="ECO:0007669"/>
    <property type="project" value="UniProtKB-SubCell"/>
</dbReference>
<dbReference type="GO" id="GO:0008495">
    <property type="term" value="F:protoheme IX farnesyltransferase activity"/>
    <property type="evidence" value="ECO:0007669"/>
    <property type="project" value="UniProtKB-UniRule"/>
</dbReference>
<dbReference type="GO" id="GO:0048034">
    <property type="term" value="P:heme O biosynthetic process"/>
    <property type="evidence" value="ECO:0007669"/>
    <property type="project" value="UniProtKB-UniRule"/>
</dbReference>
<dbReference type="CDD" id="cd13957">
    <property type="entry name" value="PT_UbiA_Cox10"/>
    <property type="match status" value="1"/>
</dbReference>
<dbReference type="FunFam" id="1.10.357.140:FF:000001">
    <property type="entry name" value="Protoheme IX farnesyltransferase"/>
    <property type="match status" value="1"/>
</dbReference>
<dbReference type="Gene3D" id="1.10.357.140">
    <property type="entry name" value="UbiA prenyltransferase"/>
    <property type="match status" value="1"/>
</dbReference>
<dbReference type="HAMAP" id="MF_00154">
    <property type="entry name" value="CyoE_CtaB"/>
    <property type="match status" value="1"/>
</dbReference>
<dbReference type="InterPro" id="IPR006369">
    <property type="entry name" value="Protohaem_IX_farnesylTrfase"/>
</dbReference>
<dbReference type="InterPro" id="IPR000537">
    <property type="entry name" value="UbiA_prenyltransferase"/>
</dbReference>
<dbReference type="InterPro" id="IPR044878">
    <property type="entry name" value="UbiA_sf"/>
</dbReference>
<dbReference type="NCBIfam" id="TIGR01473">
    <property type="entry name" value="cyoE_ctaB"/>
    <property type="match status" value="1"/>
</dbReference>
<dbReference type="NCBIfam" id="NF003349">
    <property type="entry name" value="PRK04375.1-2"/>
    <property type="match status" value="1"/>
</dbReference>
<dbReference type="PANTHER" id="PTHR43448:SF7">
    <property type="entry name" value="4-HYDROXYBENZOATE SOLANESYLTRANSFERASE"/>
    <property type="match status" value="1"/>
</dbReference>
<dbReference type="PANTHER" id="PTHR43448">
    <property type="entry name" value="PROTOHEME IX FARNESYLTRANSFERASE, MITOCHONDRIAL"/>
    <property type="match status" value="1"/>
</dbReference>
<dbReference type="Pfam" id="PF01040">
    <property type="entry name" value="UbiA"/>
    <property type="match status" value="1"/>
</dbReference>
<evidence type="ECO:0000255" key="1">
    <source>
        <dbReference type="HAMAP-Rule" id="MF_00154"/>
    </source>
</evidence>
<accession>A3PZB2</accession>
<feature type="chain" id="PRO_0000327087" description="Protoheme IX farnesyltransferase">
    <location>
        <begin position="1"/>
        <end position="310"/>
    </location>
</feature>
<feature type="transmembrane region" description="Helical" evidence="1">
    <location>
        <begin position="31"/>
        <end position="51"/>
    </location>
</feature>
<feature type="transmembrane region" description="Helical" evidence="1">
    <location>
        <begin position="53"/>
        <end position="73"/>
    </location>
</feature>
<feature type="transmembrane region" description="Helical" evidence="1">
    <location>
        <begin position="102"/>
        <end position="122"/>
    </location>
</feature>
<feature type="transmembrane region" description="Helical" evidence="1">
    <location>
        <begin position="124"/>
        <end position="144"/>
    </location>
</feature>
<feature type="transmembrane region" description="Helical" evidence="1">
    <location>
        <begin position="149"/>
        <end position="169"/>
    </location>
</feature>
<feature type="transmembrane region" description="Helical" evidence="1">
    <location>
        <begin position="170"/>
        <end position="190"/>
    </location>
</feature>
<feature type="transmembrane region" description="Helical" evidence="1">
    <location>
        <begin position="242"/>
        <end position="262"/>
    </location>
</feature>
<feature type="transmembrane region" description="Helical" evidence="1">
    <location>
        <begin position="289"/>
        <end position="309"/>
    </location>
</feature>
<name>COXX_MYCSJ</name>
<protein>
    <recommendedName>
        <fullName evidence="1">Protoheme IX farnesyltransferase</fullName>
        <ecNumber evidence="1">2.5.1.141</ecNumber>
    </recommendedName>
    <alternativeName>
        <fullName evidence="1">Heme B farnesyltransferase</fullName>
    </alternativeName>
    <alternativeName>
        <fullName evidence="1">Heme O synthase</fullName>
    </alternativeName>
</protein>
<sequence length="310" mass="33824">MSIRERHLSHGAPSRIRTTVLAYLALTKPRVIELLLVTAIPAMLLADRGSVDPLLILNTLIGGMLAAAGANTLNCVADADIDKKMKRTARRPLARDTVPTRNALIFGLVLSVGSFFWLWGTSNLLSGLLAVATIAFYVFVYTLLLKRRTSQNVVWGGAAGCMPVMIGWSAVTGTIQWPALVMFAIIFFWTPPHTWALAMRYKDDYKAAGVPMLPAVATERQVTRQILIYTWLTVLTTLALALATGWLYASVAVLAGTWFLVMAHQLYNGVKRGEPVKPLRLFLQSNNYLAVVFAALAVDSVLALPTLLGS</sequence>